<protein>
    <recommendedName>
        <fullName evidence="1">tRNA dimethylallyltransferase</fullName>
        <ecNumber evidence="1">2.5.1.75</ecNumber>
    </recommendedName>
    <alternativeName>
        <fullName evidence="1">Dimethylallyl diphosphate:tRNA dimethylallyltransferase</fullName>
        <shortName evidence="1">DMAPP:tRNA dimethylallyltransferase</shortName>
        <shortName evidence="1">DMATase</shortName>
    </alternativeName>
    <alternativeName>
        <fullName evidence="1">Isopentenyl-diphosphate:tRNA isopentenyltransferase</fullName>
        <shortName evidence="1">IPP transferase</shortName>
        <shortName evidence="1">IPPT</shortName>
        <shortName evidence="1">IPTase</shortName>
    </alternativeName>
</protein>
<feature type="chain" id="PRO_0000377321" description="tRNA dimethylallyltransferase">
    <location>
        <begin position="1"/>
        <end position="304"/>
    </location>
</feature>
<feature type="region of interest" description="Interaction with substrate tRNA" evidence="1">
    <location>
        <begin position="35"/>
        <end position="38"/>
    </location>
</feature>
<feature type="region of interest" description="Interaction with substrate tRNA" evidence="1">
    <location>
        <begin position="159"/>
        <end position="163"/>
    </location>
</feature>
<feature type="region of interest" description="Interaction with substrate tRNA" evidence="1">
    <location>
        <begin position="240"/>
        <end position="245"/>
    </location>
</feature>
<feature type="binding site" evidence="1">
    <location>
        <begin position="10"/>
        <end position="17"/>
    </location>
    <ligand>
        <name>ATP</name>
        <dbReference type="ChEBI" id="CHEBI:30616"/>
    </ligand>
</feature>
<feature type="binding site" evidence="1">
    <location>
        <begin position="12"/>
        <end position="17"/>
    </location>
    <ligand>
        <name>substrate</name>
    </ligand>
</feature>
<feature type="site" description="Interaction with substrate tRNA" evidence="1">
    <location>
        <position position="101"/>
    </location>
</feature>
<feature type="site" description="Interaction with substrate tRNA" evidence="1">
    <location>
        <position position="123"/>
    </location>
</feature>
<accession>A1RFR6</accession>
<comment type="function">
    <text evidence="1">Catalyzes the transfer of a dimethylallyl group onto the adenine at position 37 in tRNAs that read codons beginning with uridine, leading to the formation of N6-(dimethylallyl)adenosine (i(6)A).</text>
</comment>
<comment type="catalytic activity">
    <reaction evidence="1">
        <text>adenosine(37) in tRNA + dimethylallyl diphosphate = N(6)-dimethylallyladenosine(37) in tRNA + diphosphate</text>
        <dbReference type="Rhea" id="RHEA:26482"/>
        <dbReference type="Rhea" id="RHEA-COMP:10162"/>
        <dbReference type="Rhea" id="RHEA-COMP:10375"/>
        <dbReference type="ChEBI" id="CHEBI:33019"/>
        <dbReference type="ChEBI" id="CHEBI:57623"/>
        <dbReference type="ChEBI" id="CHEBI:74411"/>
        <dbReference type="ChEBI" id="CHEBI:74415"/>
        <dbReference type="EC" id="2.5.1.75"/>
    </reaction>
</comment>
<comment type="cofactor">
    <cofactor evidence="1">
        <name>Mg(2+)</name>
        <dbReference type="ChEBI" id="CHEBI:18420"/>
    </cofactor>
</comment>
<comment type="subunit">
    <text evidence="1">Monomer.</text>
</comment>
<comment type="similarity">
    <text evidence="1">Belongs to the IPP transferase family.</text>
</comment>
<reference key="1">
    <citation type="submission" date="2006-12" db="EMBL/GenBank/DDBJ databases">
        <title>Complete sequence of Shewanella sp. W3-18-1.</title>
        <authorList>
            <consortium name="US DOE Joint Genome Institute"/>
            <person name="Copeland A."/>
            <person name="Lucas S."/>
            <person name="Lapidus A."/>
            <person name="Barry K."/>
            <person name="Detter J.C."/>
            <person name="Glavina del Rio T."/>
            <person name="Hammon N."/>
            <person name="Israni S."/>
            <person name="Dalin E."/>
            <person name="Tice H."/>
            <person name="Pitluck S."/>
            <person name="Chain P."/>
            <person name="Malfatti S."/>
            <person name="Shin M."/>
            <person name="Vergez L."/>
            <person name="Schmutz J."/>
            <person name="Larimer F."/>
            <person name="Land M."/>
            <person name="Hauser L."/>
            <person name="Kyrpides N."/>
            <person name="Lykidis A."/>
            <person name="Tiedje J."/>
            <person name="Richardson P."/>
        </authorList>
    </citation>
    <scope>NUCLEOTIDE SEQUENCE [LARGE SCALE GENOMIC DNA]</scope>
    <source>
        <strain>W3-18-1</strain>
    </source>
</reference>
<dbReference type="EC" id="2.5.1.75" evidence="1"/>
<dbReference type="EMBL" id="CP000503">
    <property type="protein sequence ID" value="ABM23511.1"/>
    <property type="molecule type" value="Genomic_DNA"/>
</dbReference>
<dbReference type="SMR" id="A1RFR6"/>
<dbReference type="KEGG" id="shw:Sputw3181_0660"/>
<dbReference type="HOGENOM" id="CLU_032616_0_0_6"/>
<dbReference type="Proteomes" id="UP000002597">
    <property type="component" value="Chromosome"/>
</dbReference>
<dbReference type="GO" id="GO:0005524">
    <property type="term" value="F:ATP binding"/>
    <property type="evidence" value="ECO:0007669"/>
    <property type="project" value="UniProtKB-UniRule"/>
</dbReference>
<dbReference type="GO" id="GO:0052381">
    <property type="term" value="F:tRNA dimethylallyltransferase activity"/>
    <property type="evidence" value="ECO:0007669"/>
    <property type="project" value="UniProtKB-UniRule"/>
</dbReference>
<dbReference type="GO" id="GO:0006400">
    <property type="term" value="P:tRNA modification"/>
    <property type="evidence" value="ECO:0007669"/>
    <property type="project" value="TreeGrafter"/>
</dbReference>
<dbReference type="FunFam" id="1.10.20.140:FF:000001">
    <property type="entry name" value="tRNA dimethylallyltransferase"/>
    <property type="match status" value="1"/>
</dbReference>
<dbReference type="Gene3D" id="1.10.20.140">
    <property type="match status" value="1"/>
</dbReference>
<dbReference type="Gene3D" id="3.40.50.300">
    <property type="entry name" value="P-loop containing nucleotide triphosphate hydrolases"/>
    <property type="match status" value="1"/>
</dbReference>
<dbReference type="HAMAP" id="MF_00185">
    <property type="entry name" value="IPP_trans"/>
    <property type="match status" value="1"/>
</dbReference>
<dbReference type="InterPro" id="IPR039657">
    <property type="entry name" value="Dimethylallyltransferase"/>
</dbReference>
<dbReference type="InterPro" id="IPR018022">
    <property type="entry name" value="IPT"/>
</dbReference>
<dbReference type="InterPro" id="IPR027417">
    <property type="entry name" value="P-loop_NTPase"/>
</dbReference>
<dbReference type="NCBIfam" id="TIGR00174">
    <property type="entry name" value="miaA"/>
    <property type="match status" value="1"/>
</dbReference>
<dbReference type="PANTHER" id="PTHR11088">
    <property type="entry name" value="TRNA DIMETHYLALLYLTRANSFERASE"/>
    <property type="match status" value="1"/>
</dbReference>
<dbReference type="PANTHER" id="PTHR11088:SF60">
    <property type="entry name" value="TRNA DIMETHYLALLYLTRANSFERASE"/>
    <property type="match status" value="1"/>
</dbReference>
<dbReference type="Pfam" id="PF01715">
    <property type="entry name" value="IPPT"/>
    <property type="match status" value="1"/>
</dbReference>
<dbReference type="SUPFAM" id="SSF52540">
    <property type="entry name" value="P-loop containing nucleoside triphosphate hydrolases"/>
    <property type="match status" value="1"/>
</dbReference>
<organism>
    <name type="scientific">Shewanella sp. (strain W3-18-1)</name>
    <dbReference type="NCBI Taxonomy" id="351745"/>
    <lineage>
        <taxon>Bacteria</taxon>
        <taxon>Pseudomonadati</taxon>
        <taxon>Pseudomonadota</taxon>
        <taxon>Gammaproteobacteria</taxon>
        <taxon>Alteromonadales</taxon>
        <taxon>Shewanellaceae</taxon>
        <taxon>Shewanella</taxon>
    </lineage>
</organism>
<keyword id="KW-0067">ATP-binding</keyword>
<keyword id="KW-0460">Magnesium</keyword>
<keyword id="KW-0547">Nucleotide-binding</keyword>
<keyword id="KW-0808">Transferase</keyword>
<keyword id="KW-0819">tRNA processing</keyword>
<name>MIAA_SHESW</name>
<proteinExistence type="inferred from homology"/>
<gene>
    <name evidence="1" type="primary">miaA</name>
    <name type="ordered locus">Sputw3181_0660</name>
</gene>
<evidence type="ECO:0000255" key="1">
    <source>
        <dbReference type="HAMAP-Rule" id="MF_00185"/>
    </source>
</evidence>
<sequence>MLPKVLFLMGPTASGKTALALELAENHNCEIISVDSALIYRGMDIGSAKPSIEELARGPHRLIDIRDPSESYSAADFRADALAEIEQIIRMGKTPLLVGGTMMYFKALLEGLSPLPSADDAIRADIQAEADAKGWETLHDQLRDIDPVSAERIHPNDPQRLSRALEVYRISGKSLTELTQTKSAPLPYDVVQFAIAPRERKVLHDLIAQRFRIMLQQGFIGEVTQLKARGDLHLDLPSMRCVGYRQCWQHLDGEFDYDTMVEKAVAATRQLAKRQLTWLRSWPELNWLESGAEGNLVTLMRHCR</sequence>